<sequence>MKTFTAALLVGTALAAVPQQQPLQTQVEDSAWAKPLEDLKDTIKSMGAEAKQAWDQLASAFPDALNEYTLFSAPKKHTRRPDSHWDHVVRGADVQGIWVDGVDGQKHREVDGKLENYDLRVKAVDPSKLGIDPGVKQFSGYLDDNENDKHLFYWFFESRNDPKNDPVVLWLNGGPGCSSLTGLFFELGPASIDKNLKVIHNPYSWNSNASVIFLDQPVNVGFSYSGSSVSDTIAAGKDVYALLTLFFKQFPQYAKQDFHIAGESYAGHYIPAFASEILSHKNRNINLKSVLIGNGLTDPLTQYPHYRPMACGEGGYPAVLDESSCRSMDNALPRCQSMIESCYSSESAWVCVPASIYCNNAMIGPYQRTGQNVYDVRTKCEDGSLCYTGLNYITQWLNQKPVMEALGAEVESYDSCNMDINRNFLFHGDWMKPYHRLVPGLIEKLPVLIYAGDADFICNWLGNKAWTETLEWSGRAEFASAEMKNLTIVDNKSKGKNIGQVKSHGNFTFMRLFGGGHMVPLDQPEASLEFFNRWLGGEWKA</sequence>
<proteinExistence type="inferred from homology"/>
<dbReference type="EC" id="3.4.16.5"/>
<dbReference type="EMBL" id="CH476616">
    <property type="protein sequence ID" value="EEP78175.1"/>
    <property type="molecule type" value="Genomic_DNA"/>
</dbReference>
<dbReference type="RefSeq" id="XP_002543504.1">
    <property type="nucleotide sequence ID" value="XM_002543458.1"/>
</dbReference>
<dbReference type="SMR" id="C4JNM2"/>
<dbReference type="FunCoup" id="C4JNM2">
    <property type="interactions" value="752"/>
</dbReference>
<dbReference type="STRING" id="336963.C4JNM2"/>
<dbReference type="ESTHER" id="uncre-cbpya">
    <property type="family name" value="Carboxypeptidase_S10"/>
</dbReference>
<dbReference type="MEROPS" id="S10.001"/>
<dbReference type="GlyCosmos" id="C4JNM2">
    <property type="glycosylation" value="4 sites, No reported glycans"/>
</dbReference>
<dbReference type="GeneID" id="8439365"/>
<dbReference type="KEGG" id="ure:UREG_03020"/>
<dbReference type="VEuPathDB" id="FungiDB:UREG_03020"/>
<dbReference type="eggNOG" id="KOG1282">
    <property type="taxonomic scope" value="Eukaryota"/>
</dbReference>
<dbReference type="HOGENOM" id="CLU_008523_10_4_1"/>
<dbReference type="InParanoid" id="C4JNM2"/>
<dbReference type="OMA" id="AIANNMS"/>
<dbReference type="OrthoDB" id="443318at2759"/>
<dbReference type="Proteomes" id="UP000002058">
    <property type="component" value="Unassembled WGS sequence"/>
</dbReference>
<dbReference type="GO" id="GO:0000324">
    <property type="term" value="C:fungal-type vacuole"/>
    <property type="evidence" value="ECO:0007669"/>
    <property type="project" value="TreeGrafter"/>
</dbReference>
<dbReference type="GO" id="GO:0004185">
    <property type="term" value="F:serine-type carboxypeptidase activity"/>
    <property type="evidence" value="ECO:0007669"/>
    <property type="project" value="UniProtKB-EC"/>
</dbReference>
<dbReference type="GO" id="GO:0006508">
    <property type="term" value="P:proteolysis"/>
    <property type="evidence" value="ECO:0007669"/>
    <property type="project" value="UniProtKB-KW"/>
</dbReference>
<dbReference type="FunFam" id="1.10.287.410:FF:000001">
    <property type="entry name" value="Carboxypeptidase Y"/>
    <property type="match status" value="1"/>
</dbReference>
<dbReference type="Gene3D" id="1.10.287.410">
    <property type="match status" value="1"/>
</dbReference>
<dbReference type="Gene3D" id="3.40.50.1820">
    <property type="entry name" value="alpha/beta hydrolase"/>
    <property type="match status" value="1"/>
</dbReference>
<dbReference type="InterPro" id="IPR029058">
    <property type="entry name" value="AB_hydrolase_fold"/>
</dbReference>
<dbReference type="InterPro" id="IPR001563">
    <property type="entry name" value="Peptidase_S10"/>
</dbReference>
<dbReference type="InterPro" id="IPR008442">
    <property type="entry name" value="Propeptide_carboxypepY"/>
</dbReference>
<dbReference type="InterPro" id="IPR018202">
    <property type="entry name" value="Ser_caboxypep_ser_AS"/>
</dbReference>
<dbReference type="PANTHER" id="PTHR11802:SF113">
    <property type="entry name" value="SERINE CARBOXYPEPTIDASE CTSA-4.1"/>
    <property type="match status" value="1"/>
</dbReference>
<dbReference type="PANTHER" id="PTHR11802">
    <property type="entry name" value="SERINE PROTEASE FAMILY S10 SERINE CARBOXYPEPTIDASE"/>
    <property type="match status" value="1"/>
</dbReference>
<dbReference type="Pfam" id="PF05388">
    <property type="entry name" value="Carbpep_Y_N"/>
    <property type="match status" value="1"/>
</dbReference>
<dbReference type="Pfam" id="PF00450">
    <property type="entry name" value="Peptidase_S10"/>
    <property type="match status" value="1"/>
</dbReference>
<dbReference type="PRINTS" id="PR00724">
    <property type="entry name" value="CRBOXYPTASEC"/>
</dbReference>
<dbReference type="SUPFAM" id="SSF53474">
    <property type="entry name" value="alpha/beta-Hydrolases"/>
    <property type="match status" value="1"/>
</dbReference>
<dbReference type="PROSITE" id="PS00131">
    <property type="entry name" value="CARBOXYPEPT_SER_SER"/>
    <property type="match status" value="1"/>
</dbReference>
<reference key="1">
    <citation type="journal article" date="2009" name="Genome Res.">
        <title>Comparative genomic analyses of the human fungal pathogens Coccidioides and their relatives.</title>
        <authorList>
            <person name="Sharpton T.J."/>
            <person name="Stajich J.E."/>
            <person name="Rounsley S.D."/>
            <person name="Gardner M.J."/>
            <person name="Wortman J.R."/>
            <person name="Jordar V.S."/>
            <person name="Maiti R."/>
            <person name="Kodira C.D."/>
            <person name="Neafsey D.E."/>
            <person name="Zeng Q."/>
            <person name="Hung C.-Y."/>
            <person name="McMahan C."/>
            <person name="Muszewska A."/>
            <person name="Grynberg M."/>
            <person name="Mandel M.A."/>
            <person name="Kellner E.M."/>
            <person name="Barker B.M."/>
            <person name="Galgiani J.N."/>
            <person name="Orbach M.J."/>
            <person name="Kirkland T.N."/>
            <person name="Cole G.T."/>
            <person name="Henn M.R."/>
            <person name="Birren B.W."/>
            <person name="Taylor J.W."/>
        </authorList>
    </citation>
    <scope>NUCLEOTIDE SEQUENCE [LARGE SCALE GENOMIC DNA]</scope>
    <source>
        <strain>UAMH 1704</strain>
    </source>
</reference>
<organism>
    <name type="scientific">Uncinocarpus reesii (strain UAMH 1704)</name>
    <dbReference type="NCBI Taxonomy" id="336963"/>
    <lineage>
        <taxon>Eukaryota</taxon>
        <taxon>Fungi</taxon>
        <taxon>Dikarya</taxon>
        <taxon>Ascomycota</taxon>
        <taxon>Pezizomycotina</taxon>
        <taxon>Eurotiomycetes</taxon>
        <taxon>Eurotiomycetidae</taxon>
        <taxon>Onygenales</taxon>
        <taxon>Onygenaceae</taxon>
        <taxon>Uncinocarpus</taxon>
    </lineage>
</organism>
<feature type="signal peptide" evidence="2">
    <location>
        <begin position="1"/>
        <end position="17"/>
    </location>
</feature>
<feature type="propeptide" id="PRO_0000407490" evidence="1">
    <location>
        <begin position="18"/>
        <end position="122"/>
    </location>
</feature>
<feature type="chain" id="PRO_0000407491" description="Carboxypeptidase Y homolog A">
    <location>
        <begin position="123"/>
        <end position="541"/>
    </location>
</feature>
<feature type="active site" evidence="3">
    <location>
        <position position="264"/>
    </location>
</feature>
<feature type="active site" evidence="3">
    <location>
        <position position="455"/>
    </location>
</feature>
<feature type="active site" evidence="3">
    <location>
        <position position="517"/>
    </location>
</feature>
<feature type="glycosylation site" description="N-linked (GlcNAc...) asparagine" evidence="2">
    <location>
        <position position="208"/>
    </location>
</feature>
<feature type="glycosylation site" description="N-linked (GlcNAc...) asparagine" evidence="2">
    <location>
        <position position="485"/>
    </location>
</feature>
<feature type="glycosylation site" description="N-linked (GlcNAc...) asparagine" evidence="2">
    <location>
        <position position="491"/>
    </location>
</feature>
<feature type="glycosylation site" description="N-linked (GlcNAc...) asparagine" evidence="2">
    <location>
        <position position="506"/>
    </location>
</feature>
<feature type="disulfide bond" evidence="1">
    <location>
        <begin position="177"/>
        <end position="416"/>
    </location>
</feature>
<feature type="disulfide bond" evidence="1">
    <location>
        <begin position="311"/>
        <end position="325"/>
    </location>
</feature>
<feature type="disulfide bond" evidence="1">
    <location>
        <begin position="335"/>
        <end position="358"/>
    </location>
</feature>
<feature type="disulfide bond" evidence="1">
    <location>
        <begin position="342"/>
        <end position="351"/>
    </location>
</feature>
<feature type="disulfide bond" evidence="1">
    <location>
        <begin position="380"/>
        <end position="386"/>
    </location>
</feature>
<protein>
    <recommendedName>
        <fullName>Carboxypeptidase Y homolog A</fullName>
        <ecNumber>3.4.16.5</ecNumber>
    </recommendedName>
</protein>
<name>CBPYA_UNCRE</name>
<evidence type="ECO:0000250" key="1"/>
<evidence type="ECO:0000255" key="2"/>
<evidence type="ECO:0000255" key="3">
    <source>
        <dbReference type="PROSITE-ProRule" id="PRU10074"/>
    </source>
</evidence>
<evidence type="ECO:0000305" key="4"/>
<gene>
    <name type="primary">cpyA</name>
    <name type="ORF">UREG_03020</name>
</gene>
<accession>C4JNM2</accession>
<comment type="function">
    <text evidence="1">Vacuolar carboxypeptidase involved in degradation of small peptides. Digests preferentially peptides containing an aliphatic or hydrophobic residue in P1' position, as well as methionine, leucine or phenylalanine in P1 position of ester substrate (By similarity).</text>
</comment>
<comment type="catalytic activity">
    <reaction evidence="3">
        <text>Release of a C-terminal amino acid with broad specificity.</text>
        <dbReference type="EC" id="3.4.16.5"/>
    </reaction>
</comment>
<comment type="subcellular location">
    <subcellularLocation>
        <location evidence="1">Vacuole</location>
    </subcellularLocation>
</comment>
<comment type="similarity">
    <text evidence="4">Belongs to the peptidase S10 family.</text>
</comment>
<keyword id="KW-0121">Carboxypeptidase</keyword>
<keyword id="KW-1015">Disulfide bond</keyword>
<keyword id="KW-0325">Glycoprotein</keyword>
<keyword id="KW-0378">Hydrolase</keyword>
<keyword id="KW-0645">Protease</keyword>
<keyword id="KW-1185">Reference proteome</keyword>
<keyword id="KW-0732">Signal</keyword>
<keyword id="KW-0926">Vacuole</keyword>
<keyword id="KW-0865">Zymogen</keyword>